<dbReference type="EMBL" id="CP000384">
    <property type="protein sequence ID" value="ABG09656.1"/>
    <property type="molecule type" value="Genomic_DNA"/>
</dbReference>
<dbReference type="SMR" id="Q1B628"/>
<dbReference type="KEGG" id="mmc:Mmcs_3549"/>
<dbReference type="HOGENOM" id="CLU_095424_4_0_11"/>
<dbReference type="BioCyc" id="MSP164756:G1G6O-3620-MONOMER"/>
<dbReference type="GO" id="GO:0022625">
    <property type="term" value="C:cytosolic large ribosomal subunit"/>
    <property type="evidence" value="ECO:0007669"/>
    <property type="project" value="TreeGrafter"/>
</dbReference>
<dbReference type="GO" id="GO:0003735">
    <property type="term" value="F:structural constituent of ribosome"/>
    <property type="evidence" value="ECO:0007669"/>
    <property type="project" value="InterPro"/>
</dbReference>
<dbReference type="GO" id="GO:0006412">
    <property type="term" value="P:translation"/>
    <property type="evidence" value="ECO:0007669"/>
    <property type="project" value="UniProtKB-UniRule"/>
</dbReference>
<dbReference type="FunFam" id="2.40.50.100:FF:000020">
    <property type="entry name" value="50S ribosomal protein L27"/>
    <property type="match status" value="1"/>
</dbReference>
<dbReference type="Gene3D" id="2.40.50.100">
    <property type="match status" value="1"/>
</dbReference>
<dbReference type="HAMAP" id="MF_00539">
    <property type="entry name" value="Ribosomal_bL27"/>
    <property type="match status" value="1"/>
</dbReference>
<dbReference type="InterPro" id="IPR001684">
    <property type="entry name" value="Ribosomal_bL27"/>
</dbReference>
<dbReference type="InterPro" id="IPR018261">
    <property type="entry name" value="Ribosomal_bL27_CS"/>
</dbReference>
<dbReference type="NCBIfam" id="TIGR00062">
    <property type="entry name" value="L27"/>
    <property type="match status" value="1"/>
</dbReference>
<dbReference type="PANTHER" id="PTHR15893:SF0">
    <property type="entry name" value="LARGE RIBOSOMAL SUBUNIT PROTEIN BL27M"/>
    <property type="match status" value="1"/>
</dbReference>
<dbReference type="PANTHER" id="PTHR15893">
    <property type="entry name" value="RIBOSOMAL PROTEIN L27"/>
    <property type="match status" value="1"/>
</dbReference>
<dbReference type="Pfam" id="PF01016">
    <property type="entry name" value="Ribosomal_L27"/>
    <property type="match status" value="1"/>
</dbReference>
<dbReference type="PRINTS" id="PR00063">
    <property type="entry name" value="RIBOSOMALL27"/>
</dbReference>
<dbReference type="SUPFAM" id="SSF110324">
    <property type="entry name" value="Ribosomal L27 protein-like"/>
    <property type="match status" value="1"/>
</dbReference>
<dbReference type="PROSITE" id="PS00831">
    <property type="entry name" value="RIBOSOMAL_L27"/>
    <property type="match status" value="1"/>
</dbReference>
<evidence type="ECO:0000255" key="1">
    <source>
        <dbReference type="HAMAP-Rule" id="MF_00539"/>
    </source>
</evidence>
<evidence type="ECO:0000256" key="2">
    <source>
        <dbReference type="SAM" id="MobiDB-lite"/>
    </source>
</evidence>
<evidence type="ECO:0000305" key="3"/>
<comment type="similarity">
    <text evidence="1">Belongs to the bacterial ribosomal protein bL27 family.</text>
</comment>
<keyword id="KW-0687">Ribonucleoprotein</keyword>
<keyword id="KW-0689">Ribosomal protein</keyword>
<accession>Q1B628</accession>
<feature type="chain" id="PRO_1000017522" description="Large ribosomal subunit protein bL27">
    <location>
        <begin position="1"/>
        <end position="88"/>
    </location>
</feature>
<feature type="region of interest" description="Disordered" evidence="2">
    <location>
        <begin position="1"/>
        <end position="21"/>
    </location>
</feature>
<reference key="1">
    <citation type="submission" date="2006-06" db="EMBL/GenBank/DDBJ databases">
        <title>Complete sequence of chromosome of Mycobacterium sp. MCS.</title>
        <authorList>
            <consortium name="US DOE Joint Genome Institute"/>
            <person name="Copeland A."/>
            <person name="Lucas S."/>
            <person name="Lapidus A."/>
            <person name="Barry K."/>
            <person name="Detter J.C."/>
            <person name="Glavina del Rio T."/>
            <person name="Hammon N."/>
            <person name="Israni S."/>
            <person name="Dalin E."/>
            <person name="Tice H."/>
            <person name="Pitluck S."/>
            <person name="Martinez M."/>
            <person name="Schmutz J."/>
            <person name="Larimer F."/>
            <person name="Land M."/>
            <person name="Hauser L."/>
            <person name="Kyrpides N."/>
            <person name="Kim E."/>
            <person name="Miller C.D."/>
            <person name="Hughes J.E."/>
            <person name="Anderson A.J."/>
            <person name="Sims R.C."/>
            <person name="Richardson P."/>
        </authorList>
    </citation>
    <scope>NUCLEOTIDE SEQUENCE [LARGE SCALE GENOMIC DNA]</scope>
    <source>
        <strain>MCS</strain>
    </source>
</reference>
<gene>
    <name evidence="1" type="primary">rpmA</name>
    <name type="ordered locus">Mmcs_3549</name>
</gene>
<protein>
    <recommendedName>
        <fullName evidence="1">Large ribosomal subunit protein bL27</fullName>
    </recommendedName>
    <alternativeName>
        <fullName evidence="3">50S ribosomal protein L27</fullName>
    </alternativeName>
</protein>
<sequence>MAHKKGASSSRNGRDSAAQRLGVKRFGGQVVKAGEIIVRQRGTHFHPGVNVGRGGDDTLFATAPGSVEFGSRRGRKTVNIVPVARPEA</sequence>
<name>RL27_MYCSS</name>
<organism>
    <name type="scientific">Mycobacterium sp. (strain MCS)</name>
    <dbReference type="NCBI Taxonomy" id="164756"/>
    <lineage>
        <taxon>Bacteria</taxon>
        <taxon>Bacillati</taxon>
        <taxon>Actinomycetota</taxon>
        <taxon>Actinomycetes</taxon>
        <taxon>Mycobacteriales</taxon>
        <taxon>Mycobacteriaceae</taxon>
        <taxon>Mycobacterium</taxon>
    </lineage>
</organism>
<proteinExistence type="inferred from homology"/>